<sequence>MKLKGRKIVGGKAEGELIVSQKPLSFLGGVDPNTGIVTDAESDIRGQSIAGKVLAFPRGKGSTVGSYVIYALKKNGKAPKAIIVGEAETIVATGAIIAGIPMVDGIDVSKLKSGQRVRVKADEGLVEVEE</sequence>
<gene>
    <name type="ordered locus">TON_0513</name>
</gene>
<accession>B6YU58</accession>
<comment type="function">
    <text evidence="1">Component of a hydro-lyase that catalyzes the dehydration of mevalonate 5-phosphate (MVA5P) to form trans-anhydromevalonate 5-phosphate (tAHMP). Involved in the archaeal mevalonate (MVA) pathway, which provides fundamental precursors for isoprenoid biosynthesis, such as isopentenyl diphosphate (IPP) and dimethylallyl diphosphate (DMAPP).</text>
</comment>
<comment type="catalytic activity">
    <reaction evidence="1">
        <text>(R)-5-phosphomevalonate = (2E)-3-methyl-5-phosphooxypent-2-enoate + H2O</text>
        <dbReference type="Rhea" id="RHEA:78975"/>
        <dbReference type="ChEBI" id="CHEBI:15377"/>
        <dbReference type="ChEBI" id="CHEBI:58146"/>
        <dbReference type="ChEBI" id="CHEBI:229665"/>
        <dbReference type="EC" id="4.2.1.182"/>
    </reaction>
    <physiologicalReaction direction="left-to-right" evidence="1">
        <dbReference type="Rhea" id="RHEA:78976"/>
    </physiologicalReaction>
</comment>
<comment type="pathway">
    <text evidence="1">Isoprenoid biosynthesis; isopentenyl diphosphate biosynthesis via mevalonate pathway.</text>
</comment>
<comment type="subunit">
    <text evidence="1">Heterodimer composed of a large subunit (PMDh-L) and a small subunit (PMDh-S).</text>
</comment>
<comment type="similarity">
    <text evidence="1">Belongs to the AcnX type II small subunit family.</text>
</comment>
<proteinExistence type="inferred from homology"/>
<keyword id="KW-0414">Isoprene biosynthesis</keyword>
<keyword id="KW-0456">Lyase</keyword>
<dbReference type="EC" id="4.2.1.182" evidence="1"/>
<dbReference type="EMBL" id="CP000855">
    <property type="protein sequence ID" value="ACJ16000.1"/>
    <property type="molecule type" value="Genomic_DNA"/>
</dbReference>
<dbReference type="RefSeq" id="WP_012571472.1">
    <property type="nucleotide sequence ID" value="NC_011529.1"/>
</dbReference>
<dbReference type="SMR" id="B6YU58"/>
<dbReference type="STRING" id="523850.TON_0513"/>
<dbReference type="GeneID" id="7016810"/>
<dbReference type="KEGG" id="ton:TON_0513"/>
<dbReference type="PATRIC" id="fig|523850.10.peg.514"/>
<dbReference type="eggNOG" id="arCOG04279">
    <property type="taxonomic scope" value="Archaea"/>
</dbReference>
<dbReference type="HOGENOM" id="CLU_141583_2_0_2"/>
<dbReference type="OrthoDB" id="18062at2157"/>
<dbReference type="UniPathway" id="UPA00057"/>
<dbReference type="Proteomes" id="UP000002727">
    <property type="component" value="Chromosome"/>
</dbReference>
<dbReference type="GO" id="GO:0016836">
    <property type="term" value="F:hydro-lyase activity"/>
    <property type="evidence" value="ECO:0007669"/>
    <property type="project" value="UniProtKB-UniRule"/>
</dbReference>
<dbReference type="GO" id="GO:0019287">
    <property type="term" value="P:isopentenyl diphosphate biosynthetic process, mevalonate pathway"/>
    <property type="evidence" value="ECO:0007669"/>
    <property type="project" value="UniProtKB-UniRule"/>
</dbReference>
<dbReference type="CDD" id="cd01356">
    <property type="entry name" value="AcnX_swivel"/>
    <property type="match status" value="1"/>
</dbReference>
<dbReference type="Gene3D" id="3.50.30.10">
    <property type="entry name" value="Phosphohistidine domain"/>
    <property type="match status" value="1"/>
</dbReference>
<dbReference type="HAMAP" id="MF_00078">
    <property type="entry name" value="PMDh_S"/>
    <property type="match status" value="1"/>
</dbReference>
<dbReference type="InterPro" id="IPR012016">
    <property type="entry name" value="PMDh-S-like"/>
</dbReference>
<dbReference type="InterPro" id="IPR002840">
    <property type="entry name" value="PMDh-S-like_dom"/>
</dbReference>
<dbReference type="InterPro" id="IPR020794">
    <property type="entry name" value="PMDh_S"/>
</dbReference>
<dbReference type="NCBIfam" id="NF003046">
    <property type="entry name" value="PRK03955.1"/>
    <property type="match status" value="1"/>
</dbReference>
<dbReference type="PANTHER" id="PTHR36577">
    <property type="entry name" value="DUF521 DOMAIN PROTEIN (AFU_ORTHOLOGUE AFUA_6G00490)"/>
    <property type="match status" value="1"/>
</dbReference>
<dbReference type="PANTHER" id="PTHR36577:SF3">
    <property type="entry name" value="DUF521 DOMAIN PROTEIN (AFU_ORTHOLOGUE AFUA_6G00490)"/>
    <property type="match status" value="1"/>
</dbReference>
<dbReference type="Pfam" id="PF01989">
    <property type="entry name" value="AcnX_swivel_put"/>
    <property type="match status" value="1"/>
</dbReference>
<dbReference type="PIRSF" id="PIRSF004966">
    <property type="entry name" value="UCP004966"/>
    <property type="match status" value="1"/>
</dbReference>
<dbReference type="SUPFAM" id="SSF52016">
    <property type="entry name" value="LeuD/IlvD-like"/>
    <property type="match status" value="1"/>
</dbReference>
<organism>
    <name type="scientific">Thermococcus onnurineus (strain NA1)</name>
    <dbReference type="NCBI Taxonomy" id="523850"/>
    <lineage>
        <taxon>Archaea</taxon>
        <taxon>Methanobacteriati</taxon>
        <taxon>Methanobacteriota</taxon>
        <taxon>Thermococci</taxon>
        <taxon>Thermococcales</taxon>
        <taxon>Thermococcaceae</taxon>
        <taxon>Thermococcus</taxon>
    </lineage>
</organism>
<name>PMDHS_THEON</name>
<evidence type="ECO:0000255" key="1">
    <source>
        <dbReference type="HAMAP-Rule" id="MF_00078"/>
    </source>
</evidence>
<reference key="1">
    <citation type="journal article" date="2008" name="J. Bacteriol.">
        <title>The complete genome sequence of Thermococcus onnurineus NA1 reveals a mixed heterotrophic and carboxydotrophic metabolism.</title>
        <authorList>
            <person name="Lee H.S."/>
            <person name="Kang S.G."/>
            <person name="Bae S.S."/>
            <person name="Lim J.K."/>
            <person name="Cho Y."/>
            <person name="Kim Y.J."/>
            <person name="Jeon J.H."/>
            <person name="Cha S.-S."/>
            <person name="Kwon K.K."/>
            <person name="Kim H.-T."/>
            <person name="Park C.-J."/>
            <person name="Lee H.-W."/>
            <person name="Kim S.I."/>
            <person name="Chun J."/>
            <person name="Colwell R.R."/>
            <person name="Kim S.-J."/>
            <person name="Lee J.-H."/>
        </authorList>
    </citation>
    <scope>NUCLEOTIDE SEQUENCE [LARGE SCALE GENOMIC DNA]</scope>
    <source>
        <strain>NA1</strain>
    </source>
</reference>
<protein>
    <recommendedName>
        <fullName evidence="1">Phosphomevalonate dehydratase small subunit</fullName>
        <shortName evidence="1">PMDh small subunit</shortName>
        <shortName evidence="1">PMDh-S</shortName>
        <ecNumber evidence="1">4.2.1.182</ecNumber>
    </recommendedName>
</protein>
<feature type="chain" id="PRO_1000092722" description="Phosphomevalonate dehydratase small subunit">
    <location>
        <begin position="1"/>
        <end position="130"/>
    </location>
</feature>
<feature type="active site" description="Proton acceptor" evidence="1">
    <location>
        <position position="62"/>
    </location>
</feature>